<accession>Q4QL42</accession>
<keyword id="KW-0998">Cell outer membrane</keyword>
<keyword id="KW-0143">Chaperone</keyword>
<keyword id="KW-0449">Lipoprotein</keyword>
<keyword id="KW-0472">Membrane</keyword>
<keyword id="KW-0564">Palmitate</keyword>
<keyword id="KW-0653">Protein transport</keyword>
<keyword id="KW-0732">Signal</keyword>
<keyword id="KW-0813">Transport</keyword>
<gene>
    <name evidence="1" type="primary">lolB</name>
    <name type="ordered locus">NTHI1435</name>
</gene>
<reference key="1">
    <citation type="journal article" date="2005" name="J. Bacteriol.">
        <title>Genomic sequence of an otitis media isolate of nontypeable Haemophilus influenzae: comparative study with H. influenzae serotype d, strain KW20.</title>
        <authorList>
            <person name="Harrison A."/>
            <person name="Dyer D.W."/>
            <person name="Gillaspy A."/>
            <person name="Ray W.C."/>
            <person name="Mungur R."/>
            <person name="Carson M.B."/>
            <person name="Zhong H."/>
            <person name="Gipson J."/>
            <person name="Gipson M."/>
            <person name="Johnson L.S."/>
            <person name="Lewis L."/>
            <person name="Bakaletz L.O."/>
            <person name="Munson R.S. Jr."/>
        </authorList>
    </citation>
    <scope>NUCLEOTIDE SEQUENCE [LARGE SCALE GENOMIC DNA]</scope>
    <source>
        <strain>86-028NP</strain>
    </source>
</reference>
<proteinExistence type="inferred from homology"/>
<organism>
    <name type="scientific">Haemophilus influenzae (strain 86-028NP)</name>
    <dbReference type="NCBI Taxonomy" id="281310"/>
    <lineage>
        <taxon>Bacteria</taxon>
        <taxon>Pseudomonadati</taxon>
        <taxon>Pseudomonadota</taxon>
        <taxon>Gammaproteobacteria</taxon>
        <taxon>Pasteurellales</taxon>
        <taxon>Pasteurellaceae</taxon>
        <taxon>Haemophilus</taxon>
    </lineage>
</organism>
<name>LOLB_HAEI8</name>
<comment type="function">
    <text evidence="1">Plays a critical role in the incorporation of lipoproteins in the outer membrane after they are released by the LolA protein.</text>
</comment>
<comment type="subunit">
    <text evidence="1">Monomer.</text>
</comment>
<comment type="subcellular location">
    <subcellularLocation>
        <location evidence="1">Cell outer membrane</location>
        <topology evidence="1">Lipid-anchor</topology>
    </subcellularLocation>
</comment>
<comment type="similarity">
    <text evidence="1">Belongs to the LolB family.</text>
</comment>
<sequence>MNNMKTFKFLTALFATAILTACTLDMERPTNVQYIDKTDAIWQQHLQKIQKIQSYQAKGQIGYISPTERFSSRFEWQYQNPKSYTLKLYSLISKSTLLIQMHQSGMTISDNNDNQQSAANAKLLLQEIIGMDVPLEHLAYWLKGQPAMNADYQVGTNHLLGAFTYHVDGSQWTADYLTYHSNNSMPENILLKNDSTKQTLKIRVDEWIY</sequence>
<protein>
    <recommendedName>
        <fullName evidence="1">Outer-membrane lipoprotein LolB</fullName>
    </recommendedName>
</protein>
<evidence type="ECO:0000255" key="1">
    <source>
        <dbReference type="HAMAP-Rule" id="MF_00233"/>
    </source>
</evidence>
<dbReference type="EMBL" id="CP000057">
    <property type="protein sequence ID" value="AAX88255.1"/>
    <property type="molecule type" value="Genomic_DNA"/>
</dbReference>
<dbReference type="SMR" id="Q4QL42"/>
<dbReference type="KEGG" id="hit:NTHI1435"/>
<dbReference type="HOGENOM" id="CLU_092816_1_1_6"/>
<dbReference type="Proteomes" id="UP000002525">
    <property type="component" value="Chromosome"/>
</dbReference>
<dbReference type="GO" id="GO:0009279">
    <property type="term" value="C:cell outer membrane"/>
    <property type="evidence" value="ECO:0007669"/>
    <property type="project" value="UniProtKB-SubCell"/>
</dbReference>
<dbReference type="GO" id="GO:0044874">
    <property type="term" value="P:lipoprotein localization to outer membrane"/>
    <property type="evidence" value="ECO:0007669"/>
    <property type="project" value="UniProtKB-UniRule"/>
</dbReference>
<dbReference type="GO" id="GO:0015031">
    <property type="term" value="P:protein transport"/>
    <property type="evidence" value="ECO:0007669"/>
    <property type="project" value="UniProtKB-KW"/>
</dbReference>
<dbReference type="CDD" id="cd16326">
    <property type="entry name" value="LolB"/>
    <property type="match status" value="1"/>
</dbReference>
<dbReference type="Gene3D" id="2.50.20.10">
    <property type="entry name" value="Lipoprotein localisation LolA/LolB/LppX"/>
    <property type="match status" value="1"/>
</dbReference>
<dbReference type="HAMAP" id="MF_00233">
    <property type="entry name" value="LolB"/>
    <property type="match status" value="1"/>
</dbReference>
<dbReference type="InterPro" id="IPR029046">
    <property type="entry name" value="LolA/LolB/LppX"/>
</dbReference>
<dbReference type="InterPro" id="IPR004565">
    <property type="entry name" value="OM_lipoprot_LolB"/>
</dbReference>
<dbReference type="NCBIfam" id="TIGR00548">
    <property type="entry name" value="lolB"/>
    <property type="match status" value="1"/>
</dbReference>
<dbReference type="Pfam" id="PF03550">
    <property type="entry name" value="LolB"/>
    <property type="match status" value="1"/>
</dbReference>
<dbReference type="SUPFAM" id="SSF89392">
    <property type="entry name" value="Prokaryotic lipoproteins and lipoprotein localization factors"/>
    <property type="match status" value="1"/>
</dbReference>
<dbReference type="PROSITE" id="PS51257">
    <property type="entry name" value="PROKAR_LIPOPROTEIN"/>
    <property type="match status" value="1"/>
</dbReference>
<feature type="signal peptide" evidence="1">
    <location>
        <begin position="1"/>
        <end position="21"/>
    </location>
</feature>
<feature type="chain" id="PRO_1000021663" description="Outer-membrane lipoprotein LolB">
    <location>
        <begin position="22"/>
        <end position="209"/>
    </location>
</feature>
<feature type="lipid moiety-binding region" description="N-palmitoyl cysteine" evidence="1">
    <location>
        <position position="22"/>
    </location>
</feature>
<feature type="lipid moiety-binding region" description="S-diacylglycerol cysteine" evidence="1">
    <location>
        <position position="22"/>
    </location>
</feature>